<gene>
    <name type="primary">cysS</name>
    <name type="ordered locus">TP_0091</name>
</gene>
<evidence type="ECO:0000250" key="1"/>
<evidence type="ECO:0000305" key="2"/>
<protein>
    <recommendedName>
        <fullName>Cysteine--tRNA ligase</fullName>
        <ecNumber>6.1.1.16</ecNumber>
    </recommendedName>
    <alternativeName>
        <fullName>Cysteinyl-tRNA synthetase</fullName>
        <shortName>CysRS</shortName>
    </alternativeName>
</protein>
<name>SYC_TREPA</name>
<feature type="chain" id="PRO_0000159511" description="Cysteine--tRNA ligase">
    <location>
        <begin position="1"/>
        <end position="520"/>
    </location>
</feature>
<feature type="short sequence motif" description="'HIGH' region">
    <location>
        <begin position="31"/>
        <end position="41"/>
    </location>
</feature>
<feature type="short sequence motif" description="'KMSKS' region">
    <location>
        <begin position="301"/>
        <end position="305"/>
    </location>
</feature>
<feature type="binding site" evidence="1">
    <location>
        <position position="29"/>
    </location>
    <ligand>
        <name>Zn(2+)</name>
        <dbReference type="ChEBI" id="CHEBI:29105"/>
    </ligand>
</feature>
<feature type="binding site" evidence="1">
    <location>
        <position position="227"/>
    </location>
    <ligand>
        <name>Zn(2+)</name>
        <dbReference type="ChEBI" id="CHEBI:29105"/>
    </ligand>
</feature>
<feature type="binding site" evidence="1">
    <location>
        <position position="252"/>
    </location>
    <ligand>
        <name>Zn(2+)</name>
        <dbReference type="ChEBI" id="CHEBI:29105"/>
    </ligand>
</feature>
<feature type="binding site" evidence="1">
    <location>
        <position position="256"/>
    </location>
    <ligand>
        <name>Zn(2+)</name>
        <dbReference type="ChEBI" id="CHEBI:29105"/>
    </ligand>
</feature>
<feature type="binding site" evidence="1">
    <location>
        <position position="304"/>
    </location>
    <ligand>
        <name>ATP</name>
        <dbReference type="ChEBI" id="CHEBI:30616"/>
    </ligand>
</feature>
<dbReference type="EC" id="6.1.1.16"/>
<dbReference type="EMBL" id="AE000520">
    <property type="protein sequence ID" value="AAC65085.1"/>
    <property type="molecule type" value="Genomic_DNA"/>
</dbReference>
<dbReference type="PIR" id="D71368">
    <property type="entry name" value="D71368"/>
</dbReference>
<dbReference type="RefSeq" id="WP_010881540.1">
    <property type="nucleotide sequence ID" value="NC_021490.2"/>
</dbReference>
<dbReference type="SMR" id="O83129"/>
<dbReference type="IntAct" id="O83129">
    <property type="interactions" value="1"/>
</dbReference>
<dbReference type="STRING" id="243276.TP_0091"/>
<dbReference type="EnsemblBacteria" id="AAC65085">
    <property type="protein sequence ID" value="AAC65085"/>
    <property type="gene ID" value="TP_0091"/>
</dbReference>
<dbReference type="KEGG" id="tpa:TP_0091"/>
<dbReference type="KEGG" id="tpw:TPANIC_0091"/>
<dbReference type="eggNOG" id="COG0215">
    <property type="taxonomic scope" value="Bacteria"/>
</dbReference>
<dbReference type="HOGENOM" id="CLU_013528_0_1_12"/>
<dbReference type="OrthoDB" id="9815130at2"/>
<dbReference type="Proteomes" id="UP000000811">
    <property type="component" value="Chromosome"/>
</dbReference>
<dbReference type="GO" id="GO:0005829">
    <property type="term" value="C:cytosol"/>
    <property type="evidence" value="ECO:0007669"/>
    <property type="project" value="TreeGrafter"/>
</dbReference>
<dbReference type="GO" id="GO:0005524">
    <property type="term" value="F:ATP binding"/>
    <property type="evidence" value="ECO:0007669"/>
    <property type="project" value="UniProtKB-UniRule"/>
</dbReference>
<dbReference type="GO" id="GO:0004817">
    <property type="term" value="F:cysteine-tRNA ligase activity"/>
    <property type="evidence" value="ECO:0007669"/>
    <property type="project" value="UniProtKB-UniRule"/>
</dbReference>
<dbReference type="GO" id="GO:0008270">
    <property type="term" value="F:zinc ion binding"/>
    <property type="evidence" value="ECO:0007669"/>
    <property type="project" value="UniProtKB-UniRule"/>
</dbReference>
<dbReference type="GO" id="GO:0006423">
    <property type="term" value="P:cysteinyl-tRNA aminoacylation"/>
    <property type="evidence" value="ECO:0007669"/>
    <property type="project" value="UniProtKB-UniRule"/>
</dbReference>
<dbReference type="CDD" id="cd00672">
    <property type="entry name" value="CysRS_core"/>
    <property type="match status" value="1"/>
</dbReference>
<dbReference type="Gene3D" id="1.20.120.1910">
    <property type="entry name" value="Cysteine-tRNA ligase, C-terminal anti-codon recognition domain"/>
    <property type="match status" value="1"/>
</dbReference>
<dbReference type="Gene3D" id="3.40.50.620">
    <property type="entry name" value="HUPs"/>
    <property type="match status" value="1"/>
</dbReference>
<dbReference type="HAMAP" id="MF_00041">
    <property type="entry name" value="Cys_tRNA_synth"/>
    <property type="match status" value="1"/>
</dbReference>
<dbReference type="InterPro" id="IPR015803">
    <property type="entry name" value="Cys-tRNA-ligase"/>
</dbReference>
<dbReference type="InterPro" id="IPR015273">
    <property type="entry name" value="Cys-tRNA-synt_Ia_DALR"/>
</dbReference>
<dbReference type="InterPro" id="IPR024909">
    <property type="entry name" value="Cys-tRNA/MSH_ligase"/>
</dbReference>
<dbReference type="InterPro" id="IPR014729">
    <property type="entry name" value="Rossmann-like_a/b/a_fold"/>
</dbReference>
<dbReference type="InterPro" id="IPR032678">
    <property type="entry name" value="tRNA-synt_1_cat_dom"/>
</dbReference>
<dbReference type="InterPro" id="IPR009080">
    <property type="entry name" value="tRNAsynth_Ia_anticodon-bd"/>
</dbReference>
<dbReference type="NCBIfam" id="TIGR00435">
    <property type="entry name" value="cysS"/>
    <property type="match status" value="1"/>
</dbReference>
<dbReference type="NCBIfam" id="NF011108">
    <property type="entry name" value="PRK14536.1"/>
    <property type="match status" value="1"/>
</dbReference>
<dbReference type="PANTHER" id="PTHR10890:SF3">
    <property type="entry name" value="CYSTEINE--TRNA LIGASE, CYTOPLASMIC"/>
    <property type="match status" value="1"/>
</dbReference>
<dbReference type="PANTHER" id="PTHR10890">
    <property type="entry name" value="CYSTEINYL-TRNA SYNTHETASE"/>
    <property type="match status" value="1"/>
</dbReference>
<dbReference type="Pfam" id="PF01406">
    <property type="entry name" value="tRNA-synt_1e"/>
    <property type="match status" value="1"/>
</dbReference>
<dbReference type="PRINTS" id="PR00983">
    <property type="entry name" value="TRNASYNTHCYS"/>
</dbReference>
<dbReference type="SMART" id="SM00840">
    <property type="entry name" value="DALR_2"/>
    <property type="match status" value="1"/>
</dbReference>
<dbReference type="SUPFAM" id="SSF47323">
    <property type="entry name" value="Anticodon-binding domain of a subclass of class I aminoacyl-tRNA synthetases"/>
    <property type="match status" value="1"/>
</dbReference>
<dbReference type="SUPFAM" id="SSF52374">
    <property type="entry name" value="Nucleotidylyl transferase"/>
    <property type="match status" value="1"/>
</dbReference>
<reference key="1">
    <citation type="journal article" date="1998" name="Science">
        <title>Complete genome sequence of Treponema pallidum, the syphilis spirochete.</title>
        <authorList>
            <person name="Fraser C.M."/>
            <person name="Norris S.J."/>
            <person name="Weinstock G.M."/>
            <person name="White O."/>
            <person name="Sutton G.G."/>
            <person name="Dodson R.J."/>
            <person name="Gwinn M.L."/>
            <person name="Hickey E.K."/>
            <person name="Clayton R.A."/>
            <person name="Ketchum K.A."/>
            <person name="Sodergren E."/>
            <person name="Hardham J.M."/>
            <person name="McLeod M.P."/>
            <person name="Salzberg S.L."/>
            <person name="Peterson J.D."/>
            <person name="Khalak H.G."/>
            <person name="Richardson D.L."/>
            <person name="Howell J.K."/>
            <person name="Chidambaram M."/>
            <person name="Utterback T.R."/>
            <person name="McDonald L.A."/>
            <person name="Artiach P."/>
            <person name="Bowman C."/>
            <person name="Cotton M.D."/>
            <person name="Fujii C."/>
            <person name="Garland S.A."/>
            <person name="Hatch B."/>
            <person name="Horst K."/>
            <person name="Roberts K.M."/>
            <person name="Sandusky M."/>
            <person name="Weidman J.F."/>
            <person name="Smith H.O."/>
            <person name="Venter J.C."/>
        </authorList>
    </citation>
    <scope>NUCLEOTIDE SEQUENCE [LARGE SCALE GENOMIC DNA]</scope>
    <source>
        <strain>Nichols</strain>
    </source>
</reference>
<accession>O83129</accession>
<comment type="catalytic activity">
    <reaction>
        <text>tRNA(Cys) + L-cysteine + ATP = L-cysteinyl-tRNA(Cys) + AMP + diphosphate</text>
        <dbReference type="Rhea" id="RHEA:17773"/>
        <dbReference type="Rhea" id="RHEA-COMP:9661"/>
        <dbReference type="Rhea" id="RHEA-COMP:9679"/>
        <dbReference type="ChEBI" id="CHEBI:30616"/>
        <dbReference type="ChEBI" id="CHEBI:33019"/>
        <dbReference type="ChEBI" id="CHEBI:35235"/>
        <dbReference type="ChEBI" id="CHEBI:78442"/>
        <dbReference type="ChEBI" id="CHEBI:78517"/>
        <dbReference type="ChEBI" id="CHEBI:456215"/>
        <dbReference type="EC" id="6.1.1.16"/>
    </reaction>
</comment>
<comment type="cofactor">
    <cofactor evidence="1">
        <name>Zn(2+)</name>
        <dbReference type="ChEBI" id="CHEBI:29105"/>
    </cofactor>
    <text evidence="1">Binds 1 zinc ion per subunit.</text>
</comment>
<comment type="subunit">
    <text evidence="1">Monomer.</text>
</comment>
<comment type="subcellular location">
    <subcellularLocation>
        <location evidence="1">Cytoplasm</location>
    </subcellularLocation>
</comment>
<comment type="similarity">
    <text evidence="2">Belongs to the class-I aminoacyl-tRNA synthetase family.</text>
</comment>
<proteinExistence type="inferred from homology"/>
<sequence length="520" mass="58403">MALRVYNTLTRQQEHFQPWEHGHVRLYGCGPTVYNYPHLGNLRAYVFQDTVRRTLHFLGYRVTYVMNITDVGHLESDADSGEDKLVRSAQAHGHSVLQVAAHYRAAFFRDTALLGIEEPSIVCNASDCIQDMIAFIEQLLARGHAYCAGGNVYFDVRSFPSYESFGSAAVEDVQEGEDAARARVAHDTHKRDARDFVLWFTRSKFVRHALTWDSPWGRGYPGWHIGCSAMSMKFLGPRCDIHIGGVDHIRVHHRNERAQCEAITGAPWVRYWLHHEFLLMQLQKRAVHADMGSSVVSSFSKMSKSCGQFLTLSSLQERGFQPADFRFFLLSGQYRTQLAFSWDALKTARAARRSFVRRVARVVDAARATTGSVRGTSAECAAERVCESRASESELLLTDFRAALEDDFSTPRALSALQKLVRDTSVPPSLCVSALQVADTVLGLGIIQEATASLSAQVPAGDTLPQRPLPSEEWIGQLVRARAHARQTRDFPRADEIRRQLKAEGIELEDTHLGTIWKRV</sequence>
<organism>
    <name type="scientific">Treponema pallidum (strain Nichols)</name>
    <dbReference type="NCBI Taxonomy" id="243276"/>
    <lineage>
        <taxon>Bacteria</taxon>
        <taxon>Pseudomonadati</taxon>
        <taxon>Spirochaetota</taxon>
        <taxon>Spirochaetia</taxon>
        <taxon>Spirochaetales</taxon>
        <taxon>Treponemataceae</taxon>
        <taxon>Treponema</taxon>
    </lineage>
</organism>
<keyword id="KW-0030">Aminoacyl-tRNA synthetase</keyword>
<keyword id="KW-0067">ATP-binding</keyword>
<keyword id="KW-0963">Cytoplasm</keyword>
<keyword id="KW-0436">Ligase</keyword>
<keyword id="KW-0479">Metal-binding</keyword>
<keyword id="KW-0547">Nucleotide-binding</keyword>
<keyword id="KW-0648">Protein biosynthesis</keyword>
<keyword id="KW-1185">Reference proteome</keyword>
<keyword id="KW-0862">Zinc</keyword>